<dbReference type="EMBL" id="D38088">
    <property type="protein sequence ID" value="BAA07277.1"/>
    <property type="molecule type" value="mRNA"/>
</dbReference>
<dbReference type="PIR" id="S53520">
    <property type="entry name" value="S53520"/>
</dbReference>
<dbReference type="SMR" id="Q43214"/>
<dbReference type="STRING" id="4565.Q43214"/>
<dbReference type="PaxDb" id="4565-Traes_6AS_96DADEE3D.1"/>
<dbReference type="eggNOG" id="KOG1756">
    <property type="taxonomic scope" value="Eukaryota"/>
</dbReference>
<dbReference type="Proteomes" id="UP000019116">
    <property type="component" value="Unplaced"/>
</dbReference>
<dbReference type="ExpressionAtlas" id="Q43214">
    <property type="expression patterns" value="baseline and differential"/>
</dbReference>
<dbReference type="GO" id="GO:0000786">
    <property type="term" value="C:nucleosome"/>
    <property type="evidence" value="ECO:0000318"/>
    <property type="project" value="GO_Central"/>
</dbReference>
<dbReference type="GO" id="GO:0005634">
    <property type="term" value="C:nucleus"/>
    <property type="evidence" value="ECO:0000318"/>
    <property type="project" value="GO_Central"/>
</dbReference>
<dbReference type="GO" id="GO:0003677">
    <property type="term" value="F:DNA binding"/>
    <property type="evidence" value="ECO:0007669"/>
    <property type="project" value="UniProtKB-KW"/>
</dbReference>
<dbReference type="GO" id="GO:0046982">
    <property type="term" value="F:protein heterodimerization activity"/>
    <property type="evidence" value="ECO:0007669"/>
    <property type="project" value="InterPro"/>
</dbReference>
<dbReference type="GO" id="GO:0030527">
    <property type="term" value="F:structural constituent of chromatin"/>
    <property type="evidence" value="ECO:0000318"/>
    <property type="project" value="GO_Central"/>
</dbReference>
<dbReference type="GO" id="GO:0031507">
    <property type="term" value="P:heterochromatin formation"/>
    <property type="evidence" value="ECO:0000318"/>
    <property type="project" value="GO_Central"/>
</dbReference>
<dbReference type="CDD" id="cd00074">
    <property type="entry name" value="HFD_H2A"/>
    <property type="match status" value="1"/>
</dbReference>
<dbReference type="FunFam" id="1.10.20.10:FF:000026">
    <property type="entry name" value="Histone H2A"/>
    <property type="match status" value="1"/>
</dbReference>
<dbReference type="Gene3D" id="1.10.20.10">
    <property type="entry name" value="Histone, subunit A"/>
    <property type="match status" value="1"/>
</dbReference>
<dbReference type="InterPro" id="IPR009072">
    <property type="entry name" value="Histone-fold"/>
</dbReference>
<dbReference type="InterPro" id="IPR002119">
    <property type="entry name" value="Histone_H2A"/>
</dbReference>
<dbReference type="InterPro" id="IPR007125">
    <property type="entry name" value="Histone_H2A/H2B/H3"/>
</dbReference>
<dbReference type="InterPro" id="IPR032454">
    <property type="entry name" value="Histone_H2A_C"/>
</dbReference>
<dbReference type="InterPro" id="IPR032458">
    <property type="entry name" value="Histone_H2A_CS"/>
</dbReference>
<dbReference type="PANTHER" id="PTHR23430">
    <property type="entry name" value="HISTONE H2A"/>
    <property type="match status" value="1"/>
</dbReference>
<dbReference type="Pfam" id="PF00125">
    <property type="entry name" value="Histone"/>
    <property type="match status" value="1"/>
</dbReference>
<dbReference type="Pfam" id="PF16211">
    <property type="entry name" value="Histone_H2A_C"/>
    <property type="match status" value="1"/>
</dbReference>
<dbReference type="PRINTS" id="PR00620">
    <property type="entry name" value="HISTONEH2A"/>
</dbReference>
<dbReference type="SMART" id="SM00414">
    <property type="entry name" value="H2A"/>
    <property type="match status" value="1"/>
</dbReference>
<dbReference type="SUPFAM" id="SSF47113">
    <property type="entry name" value="Histone-fold"/>
    <property type="match status" value="1"/>
</dbReference>
<dbReference type="PROSITE" id="PS00046">
    <property type="entry name" value="HISTONE_H2A"/>
    <property type="match status" value="1"/>
</dbReference>
<keyword id="KW-0158">Chromosome</keyword>
<keyword id="KW-0238">DNA-binding</keyword>
<keyword id="KW-0544">Nucleosome core</keyword>
<keyword id="KW-0539">Nucleus</keyword>
<keyword id="KW-1185">Reference proteome</keyword>
<proteinExistence type="evidence at transcript level"/>
<gene>
    <name type="primary">H2A-3</name>
</gene>
<evidence type="ECO:0000250" key="1"/>
<evidence type="ECO:0000256" key="2">
    <source>
        <dbReference type="SAM" id="MobiDB-lite"/>
    </source>
</evidence>
<evidence type="ECO:0000269" key="3">
    <source>
    </source>
</evidence>
<evidence type="ECO:0000305" key="4"/>
<reference key="1">
    <citation type="journal article" date="1995" name="Biochim. Biophys. Acta">
        <title>Differential expression of the two types of histone H2A genes in wheat.</title>
        <authorList>
            <person name="Huh G.H."/>
            <person name="Matsuura Y."/>
            <person name="Meshi T."/>
            <person name="Iwabuchi M."/>
        </authorList>
    </citation>
    <scope>NUCLEOTIDE SEQUENCE [MRNA]</scope>
    <scope>DEVELOPMENTAL STAGE</scope>
    <scope>TISSUE SPECIFICITY</scope>
</reference>
<comment type="function">
    <text>Core component of nucleosome. Nucleosomes wrap and compact DNA into chromatin, limiting DNA accessibility to the cellular machineries which require DNA as a template. Histones thereby play a central role in transcription regulation, DNA repair, DNA replication and chromosomal stability. DNA accessibility is regulated via a complex set of post-translational modifications of histones, also called histone code, and nucleosome remodeling.</text>
</comment>
<comment type="subunit">
    <text>The nucleosome is a histone octamer containing two molecules each of H2A, H2B, H3 and H4 assembled in one H3-H4 heterotetramer and two H2A-H2B heterodimers. The octamer wraps approximately 147 bp of DNA.</text>
</comment>
<comment type="subcellular location">
    <subcellularLocation>
        <location evidence="1">Nucleus</location>
    </subcellularLocation>
    <subcellularLocation>
        <location evidence="1">Chromosome</location>
    </subcellularLocation>
</comment>
<comment type="tissue specificity">
    <text evidence="3">Abundant in meristematic tissues.</text>
</comment>
<comment type="developmental stage">
    <text evidence="3">Induced during germination.</text>
</comment>
<comment type="domain">
    <text>Contains 2 SPKK motifs which may interact with the minor groove of A/T-rich DNA sites. Phosphorylation of this motif may regulate DNA binding. This motif is reiterated in both termini of histone H1 and in the N-terminus of sea urchin histones H2B, but its presence in the C-terminus seems to be unique to plant H2A.</text>
</comment>
<comment type="similarity">
    <text evidence="4">Belongs to the histone H2A family.</text>
</comment>
<name>H2A6_WHEAT</name>
<sequence length="148" mass="15633">MAGRKGGERKKAVTRSVKAGLQFPVGRIGRYLKKGRYAQAVGSGAPVYLAAVLEYLAAEVLELAGNAAKDNKKTRIIPRHLLLAVRNDQELGRLLAGVTIAHGGVIPNINSVLLPKKAAGAAEKESTKSPKKKAATKSPKKKTAATKE</sequence>
<feature type="initiator methionine" description="Removed" evidence="1">
    <location>
        <position position="1"/>
    </location>
</feature>
<feature type="chain" id="PRO_0000244649" description="Protein H2A.6">
    <location>
        <begin position="2"/>
        <end position="148"/>
    </location>
</feature>
<feature type="region of interest" description="Disordered" evidence="2">
    <location>
        <begin position="120"/>
        <end position="148"/>
    </location>
</feature>
<feature type="short sequence motif" description="SPKK motif 1">
    <location>
        <begin position="129"/>
        <end position="132"/>
    </location>
</feature>
<feature type="short sequence motif" description="SPKK motif 2">
    <location>
        <begin position="138"/>
        <end position="141"/>
    </location>
</feature>
<feature type="compositionally biased region" description="Basic residues" evidence="2">
    <location>
        <begin position="129"/>
        <end position="148"/>
    </location>
</feature>
<accession>Q43214</accession>
<organism>
    <name type="scientific">Triticum aestivum</name>
    <name type="common">Wheat</name>
    <dbReference type="NCBI Taxonomy" id="4565"/>
    <lineage>
        <taxon>Eukaryota</taxon>
        <taxon>Viridiplantae</taxon>
        <taxon>Streptophyta</taxon>
        <taxon>Embryophyta</taxon>
        <taxon>Tracheophyta</taxon>
        <taxon>Spermatophyta</taxon>
        <taxon>Magnoliopsida</taxon>
        <taxon>Liliopsida</taxon>
        <taxon>Poales</taxon>
        <taxon>Poaceae</taxon>
        <taxon>BOP clade</taxon>
        <taxon>Pooideae</taxon>
        <taxon>Triticodae</taxon>
        <taxon>Triticeae</taxon>
        <taxon>Triticinae</taxon>
        <taxon>Triticum</taxon>
    </lineage>
</organism>
<protein>
    <recommendedName>
        <fullName>Protein H2A.6</fullName>
    </recommendedName>
    <alternativeName>
        <fullName>wcH2A-3</fullName>
    </alternativeName>
</protein>